<proteinExistence type="inferred from homology"/>
<organism>
    <name type="scientific">Vibrio vulnificus (strain YJ016)</name>
    <dbReference type="NCBI Taxonomy" id="196600"/>
    <lineage>
        <taxon>Bacteria</taxon>
        <taxon>Pseudomonadati</taxon>
        <taxon>Pseudomonadota</taxon>
        <taxon>Gammaproteobacteria</taxon>
        <taxon>Vibrionales</taxon>
        <taxon>Vibrionaceae</taxon>
        <taxon>Vibrio</taxon>
    </lineage>
</organism>
<reference key="1">
    <citation type="journal article" date="2003" name="Genome Res.">
        <title>Comparative genome analysis of Vibrio vulnificus, a marine pathogen.</title>
        <authorList>
            <person name="Chen C.-Y."/>
            <person name="Wu K.-M."/>
            <person name="Chang Y.-C."/>
            <person name="Chang C.-H."/>
            <person name="Tsai H.-C."/>
            <person name="Liao T.-L."/>
            <person name="Liu Y.-M."/>
            <person name="Chen H.-J."/>
            <person name="Shen A.B.-T."/>
            <person name="Li J.-C."/>
            <person name="Su T.-L."/>
            <person name="Shao C.-P."/>
            <person name="Lee C.-T."/>
            <person name="Hor L.-I."/>
            <person name="Tsai S.-F."/>
        </authorList>
    </citation>
    <scope>NUCLEOTIDE SEQUENCE [LARGE SCALE GENOMIC DNA]</scope>
    <source>
        <strain>YJ016</strain>
    </source>
</reference>
<dbReference type="EC" id="7.6.2.15" evidence="1"/>
<dbReference type="EMBL" id="BA000037">
    <property type="protein sequence ID" value="BAC93203.1"/>
    <property type="molecule type" value="Genomic_DNA"/>
</dbReference>
<dbReference type="RefSeq" id="WP_011078778.1">
    <property type="nucleotide sequence ID" value="NC_005139.1"/>
</dbReference>
<dbReference type="SMR" id="Q7MPC5"/>
<dbReference type="STRING" id="672.VV93_v1c04050"/>
<dbReference type="KEGG" id="vvy:VV0439"/>
<dbReference type="PATRIC" id="fig|196600.6.peg.467"/>
<dbReference type="eggNOG" id="COG3840">
    <property type="taxonomic scope" value="Bacteria"/>
</dbReference>
<dbReference type="HOGENOM" id="CLU_000604_1_22_6"/>
<dbReference type="Proteomes" id="UP000002675">
    <property type="component" value="Chromosome I"/>
</dbReference>
<dbReference type="GO" id="GO:0005886">
    <property type="term" value="C:plasma membrane"/>
    <property type="evidence" value="ECO:0007669"/>
    <property type="project" value="UniProtKB-SubCell"/>
</dbReference>
<dbReference type="GO" id="GO:0048502">
    <property type="term" value="F:ABC-type thiamine transporter activity"/>
    <property type="evidence" value="ECO:0007669"/>
    <property type="project" value="UniProtKB-EC"/>
</dbReference>
<dbReference type="GO" id="GO:0005524">
    <property type="term" value="F:ATP binding"/>
    <property type="evidence" value="ECO:0007669"/>
    <property type="project" value="UniProtKB-KW"/>
</dbReference>
<dbReference type="GO" id="GO:0016887">
    <property type="term" value="F:ATP hydrolysis activity"/>
    <property type="evidence" value="ECO:0007669"/>
    <property type="project" value="InterPro"/>
</dbReference>
<dbReference type="Gene3D" id="3.40.50.300">
    <property type="entry name" value="P-loop containing nucleotide triphosphate hydrolases"/>
    <property type="match status" value="1"/>
</dbReference>
<dbReference type="InterPro" id="IPR003593">
    <property type="entry name" value="AAA+_ATPase"/>
</dbReference>
<dbReference type="InterPro" id="IPR050093">
    <property type="entry name" value="ABC_SmlMolc_Importer"/>
</dbReference>
<dbReference type="InterPro" id="IPR003439">
    <property type="entry name" value="ABC_transporter-like_ATP-bd"/>
</dbReference>
<dbReference type="InterPro" id="IPR017871">
    <property type="entry name" value="ABC_transporter-like_CS"/>
</dbReference>
<dbReference type="InterPro" id="IPR027417">
    <property type="entry name" value="P-loop_NTPase"/>
</dbReference>
<dbReference type="InterPro" id="IPR005968">
    <property type="entry name" value="Thiamine_ABC_ThiQ"/>
</dbReference>
<dbReference type="NCBIfam" id="NF008039">
    <property type="entry name" value="PRK10771.1"/>
    <property type="match status" value="1"/>
</dbReference>
<dbReference type="NCBIfam" id="TIGR01277">
    <property type="entry name" value="thiQ"/>
    <property type="match status" value="1"/>
</dbReference>
<dbReference type="PANTHER" id="PTHR42781">
    <property type="entry name" value="SPERMIDINE/PUTRESCINE IMPORT ATP-BINDING PROTEIN POTA"/>
    <property type="match status" value="1"/>
</dbReference>
<dbReference type="PANTHER" id="PTHR42781:SF1">
    <property type="entry name" value="THIAMINE IMPORT ATP-BINDING PROTEIN THIQ"/>
    <property type="match status" value="1"/>
</dbReference>
<dbReference type="Pfam" id="PF00005">
    <property type="entry name" value="ABC_tran"/>
    <property type="match status" value="1"/>
</dbReference>
<dbReference type="SMART" id="SM00382">
    <property type="entry name" value="AAA"/>
    <property type="match status" value="1"/>
</dbReference>
<dbReference type="SUPFAM" id="SSF52540">
    <property type="entry name" value="P-loop containing nucleoside triphosphate hydrolases"/>
    <property type="match status" value="1"/>
</dbReference>
<dbReference type="PROSITE" id="PS00211">
    <property type="entry name" value="ABC_TRANSPORTER_1"/>
    <property type="match status" value="1"/>
</dbReference>
<dbReference type="PROSITE" id="PS50893">
    <property type="entry name" value="ABC_TRANSPORTER_2"/>
    <property type="match status" value="1"/>
</dbReference>
<dbReference type="PROSITE" id="PS51288">
    <property type="entry name" value="THIQ"/>
    <property type="match status" value="1"/>
</dbReference>
<comment type="function">
    <text evidence="1">Part of the ABC transporter complex ThiBPQ involved in thiamine import. Responsible for energy coupling to the transport system.</text>
</comment>
<comment type="catalytic activity">
    <reaction evidence="1">
        <text>thiamine(out) + ATP + H2O = thiamine(in) + ADP + phosphate + H(+)</text>
        <dbReference type="Rhea" id="RHEA:29811"/>
        <dbReference type="ChEBI" id="CHEBI:15377"/>
        <dbReference type="ChEBI" id="CHEBI:15378"/>
        <dbReference type="ChEBI" id="CHEBI:18385"/>
        <dbReference type="ChEBI" id="CHEBI:30616"/>
        <dbReference type="ChEBI" id="CHEBI:43474"/>
        <dbReference type="ChEBI" id="CHEBI:456216"/>
        <dbReference type="EC" id="7.6.2.15"/>
    </reaction>
</comment>
<comment type="subunit">
    <text evidence="1">The complex is composed of two ATP-binding proteins (ThiQ), two transmembrane proteins (ThiP) and a solute-binding protein (ThiB).</text>
</comment>
<comment type="subcellular location">
    <subcellularLocation>
        <location evidence="1">Cell inner membrane</location>
        <topology evidence="1">Peripheral membrane protein</topology>
    </subcellularLocation>
</comment>
<comment type="similarity">
    <text evidence="1">Belongs to the ABC transporter superfamily. Thiamine importer (TC 3.A.1.19.1) family.</text>
</comment>
<accession>Q7MPC5</accession>
<name>THIQ_VIBVY</name>
<keyword id="KW-0067">ATP-binding</keyword>
<keyword id="KW-0997">Cell inner membrane</keyword>
<keyword id="KW-1003">Cell membrane</keyword>
<keyword id="KW-0472">Membrane</keyword>
<keyword id="KW-0547">Nucleotide-binding</keyword>
<keyword id="KW-1278">Translocase</keyword>
<keyword id="KW-0813">Transport</keyword>
<sequence length="234" mass="25793">MLTLQQVHYYYHQDLFAFDLEVEAGSIVALMGPSGAGKSTLLALLAGFIAPQSGQMALDGRLLNTLSPAQRPFSMLFQEHNLFAHLTVRDNIALGLHPGLKLTSQQQKQVEQAAKQVGIEAYLDRLPEQLSGGQRQRVALARCFVQPNPIWLLDEPFSALDPVLRDEMLSLVKQLAQERAITVLMVTHHLSDARAIASHFAYIDKGTIAAHGPIASLNEKHSHPELVEFFQAAV</sequence>
<protein>
    <recommendedName>
        <fullName evidence="1">Thiamine import ATP-binding protein ThiQ</fullName>
        <ecNumber evidence="1">7.6.2.15</ecNumber>
    </recommendedName>
</protein>
<gene>
    <name evidence="1" type="primary">thiQ</name>
    <name type="ordered locus">VV0439</name>
</gene>
<evidence type="ECO:0000255" key="1">
    <source>
        <dbReference type="HAMAP-Rule" id="MF_01723"/>
    </source>
</evidence>
<feature type="chain" id="PRO_0000274469" description="Thiamine import ATP-binding protein ThiQ">
    <location>
        <begin position="1"/>
        <end position="234"/>
    </location>
</feature>
<feature type="domain" description="ABC transporter" evidence="1">
    <location>
        <begin position="2"/>
        <end position="230"/>
    </location>
</feature>
<feature type="binding site" evidence="1">
    <location>
        <begin position="32"/>
        <end position="39"/>
    </location>
    <ligand>
        <name>ATP</name>
        <dbReference type="ChEBI" id="CHEBI:30616"/>
    </ligand>
</feature>